<evidence type="ECO:0000255" key="1"/>
<evidence type="ECO:0000256" key="2">
    <source>
        <dbReference type="SAM" id="MobiDB-lite"/>
    </source>
</evidence>
<evidence type="ECO:0000269" key="3">
    <source>
    </source>
</evidence>
<evidence type="ECO:0000305" key="4"/>
<protein>
    <recommendedName>
        <fullName>Type IV secretion system protein virB10</fullName>
    </recommendedName>
</protein>
<reference key="1">
    <citation type="journal article" date="2000" name="J. Bacteriol.">
        <title>A homologue of an operon required for DNA transfer in Agrobacterium is required in Brucella abortus for virulence and intracellular multiplication.</title>
        <authorList>
            <person name="Sieira R."/>
            <person name="Comerci D.J."/>
            <person name="Sanchez D.O."/>
            <person name="Ugalde R.A."/>
        </authorList>
    </citation>
    <scope>NUCLEOTIDE SEQUENCE [GENOMIC DNA]</scope>
    <scope>TRANSCRIPTION</scope>
    <scope>FUNCTION</scope>
</reference>
<reference key="2">
    <citation type="journal article" date="2005" name="Infect. Immun.">
        <title>Whole-genome analyses of speciation events in pathogenic Brucellae.</title>
        <authorList>
            <person name="Chain P.S."/>
            <person name="Comerci D.J."/>
            <person name="Tolmasky M.E."/>
            <person name="Larimer F.W."/>
            <person name="Malfatti S.A."/>
            <person name="Vergez L.M."/>
            <person name="Aguero F."/>
            <person name="Land M.L."/>
            <person name="Ugalde R.A."/>
            <person name="Garcia E."/>
        </authorList>
    </citation>
    <scope>NUCLEOTIDE SEQUENCE [LARGE SCALE GENOMIC DNA]</scope>
    <source>
        <strain>2308</strain>
    </source>
</reference>
<feature type="chain" id="PRO_0000291384" description="Type IV secretion system protein virB10">
    <location>
        <begin position="1"/>
        <end position="388"/>
    </location>
</feature>
<feature type="transmembrane region" description="Helical" evidence="1">
    <location>
        <begin position="33"/>
        <end position="53"/>
    </location>
</feature>
<feature type="region of interest" description="Disordered" evidence="2">
    <location>
        <begin position="1"/>
        <end position="26"/>
    </location>
</feature>
<feature type="region of interest" description="Disordered" evidence="2">
    <location>
        <begin position="79"/>
        <end position="102"/>
    </location>
</feature>
<feature type="compositionally biased region" description="Pro residues" evidence="2">
    <location>
        <begin position="81"/>
        <end position="100"/>
    </location>
</feature>
<keyword id="KW-1003">Cell membrane</keyword>
<keyword id="KW-0472">Membrane</keyword>
<keyword id="KW-1185">Reference proteome</keyword>
<keyword id="KW-0812">Transmembrane</keyword>
<keyword id="KW-1133">Transmembrane helix</keyword>
<keyword id="KW-0843">Virulence</keyword>
<gene>
    <name type="primary">virB10</name>
    <name type="ordered locus">BAB2_0059</name>
</gene>
<name>VIRBA_BRUA2</name>
<accession>Q2YJ81</accession>
<accession>Q57A23</accession>
<accession>Q9KIS6</accession>
<comment type="function">
    <text evidence="3">The virB operon is essential for intracellular survival and is not involved in the invasion process. Constitutes a major determinant of virulence in mice. Virb10 seems to be per se essential for intracellular multiplication within non-professional phagocytes and is essential for pathogenesis in mice.</text>
</comment>
<comment type="subcellular location">
    <subcellularLocation>
        <location evidence="4">Cell membrane</location>
        <topology evidence="4">Single-pass membrane protein</topology>
    </subcellularLocation>
</comment>
<comment type="miscellaneous">
    <text>Transcription is turned on at the beginning of the stationary phase of vegetative growth.</text>
</comment>
<comment type="similarity">
    <text evidence="4">Belongs to the TrbI/VirB10 family.</text>
</comment>
<proteinExistence type="inferred from homology"/>
<organism>
    <name type="scientific">Brucella abortus (strain 2308)</name>
    <dbReference type="NCBI Taxonomy" id="359391"/>
    <lineage>
        <taxon>Bacteria</taxon>
        <taxon>Pseudomonadati</taxon>
        <taxon>Pseudomonadota</taxon>
        <taxon>Alphaproteobacteria</taxon>
        <taxon>Hyphomicrobiales</taxon>
        <taxon>Brucellaceae</taxon>
        <taxon>Brucella/Ochrobactrum group</taxon>
        <taxon>Brucella</taxon>
    </lineage>
</organism>
<sequence length="388" mass="41193">MTQENIPVQPGTLDGERGLPTVNENGSGRTRKVLLFLFVVGFIVVLLLLLVFHMRGNAENNHHSDKTMVQTSTVPMRTFKLPPPPPPAPPEPPAPPPAPAMPIAEPAAAALSLPPLPDDTPAKDDVLDKSASALMVVTKSSGDTNAQTAGDTVVQTTNARIQALLDSQKNTKQDAGSLGTLLHGTQTDARMASLLRNRDFLLAKGSIINCALQTRLDSTVPGMAACVVTRNMYSDNGKVLLIERGSTISGEYDANVKQGMARIYVLWTRVKTPNGVVIDLDSPGADPLGGAGLPGYIDSHFWKRFGGALMLSTIETLGRYATQKVGGGGSNQINLNTGGGESTSNLASTALKDTINIPPTLYKNQGEEIGIYIARDLDFSSVYDVKPK</sequence>
<dbReference type="EMBL" id="AF226278">
    <property type="protein sequence ID" value="AAF73903.1"/>
    <property type="molecule type" value="Genomic_DNA"/>
</dbReference>
<dbReference type="EMBL" id="AM040265">
    <property type="protein sequence ID" value="CAJ12225.1"/>
    <property type="molecule type" value="Genomic_DNA"/>
</dbReference>
<dbReference type="RefSeq" id="WP_002966519.1">
    <property type="nucleotide sequence ID" value="NZ_KN046823.1"/>
</dbReference>
<dbReference type="SMR" id="Q2YJ81"/>
<dbReference type="STRING" id="359391.BAB2_0059"/>
<dbReference type="GeneID" id="93015963"/>
<dbReference type="KEGG" id="bmf:BAB2_0059"/>
<dbReference type="PATRIC" id="fig|359391.11.peg.2007"/>
<dbReference type="HOGENOM" id="CLU_041899_6_0_5"/>
<dbReference type="PhylomeDB" id="Q2YJ81"/>
<dbReference type="BioCyc" id="MetaCyc:BAB_RS26640-MONOMER"/>
<dbReference type="Proteomes" id="UP000002719">
    <property type="component" value="Chromosome II"/>
</dbReference>
<dbReference type="GO" id="GO:0005886">
    <property type="term" value="C:plasma membrane"/>
    <property type="evidence" value="ECO:0007669"/>
    <property type="project" value="UniProtKB-SubCell"/>
</dbReference>
<dbReference type="CDD" id="cd16429">
    <property type="entry name" value="VirB10"/>
    <property type="match status" value="1"/>
</dbReference>
<dbReference type="Gene3D" id="2.40.128.260">
    <property type="entry name" value="Type IV secretion system, VirB10/TraB/TrbI"/>
    <property type="match status" value="2"/>
</dbReference>
<dbReference type="InterPro" id="IPR047695">
    <property type="entry name" value="T4SS_VirB10/PtlG"/>
</dbReference>
<dbReference type="InterPro" id="IPR005498">
    <property type="entry name" value="T4SS_VirB10/TraB/TrbI"/>
</dbReference>
<dbReference type="InterPro" id="IPR042217">
    <property type="entry name" value="T4SS_VirB10/TrbI"/>
</dbReference>
<dbReference type="NCBIfam" id="NF038091">
    <property type="entry name" value="T4SS_VirB10"/>
    <property type="match status" value="1"/>
</dbReference>
<dbReference type="Pfam" id="PF03743">
    <property type="entry name" value="TrbI"/>
    <property type="match status" value="1"/>
</dbReference>